<keyword id="KW-1015">Disulfide bond</keyword>
<keyword id="KW-0325">Glycoprotein</keyword>
<keyword id="KW-1185">Reference proteome</keyword>
<keyword id="KW-0964">Secreted</keyword>
<keyword id="KW-0732">Signal</keyword>
<protein>
    <recommendedName>
        <fullName>Tubulointerstitial nephritis antigen-like</fullName>
    </recommendedName>
    <alternativeName>
        <fullName>Glucocorticoid-inducible protein 5</fullName>
    </alternativeName>
</protein>
<comment type="function">
    <text evidence="1">May be implicated in the adrenocortical zonation and in mechanisms for repressing the CYP11B1 gene expression in adrenocortical cells. This is a non catalytic peptidase C1 family protein (By similarity).</text>
</comment>
<comment type="subcellular location">
    <subcellularLocation>
        <location evidence="1">Secreted</location>
    </subcellularLocation>
</comment>
<comment type="PTM">
    <text evidence="1">Glycosylated.</text>
</comment>
<comment type="similarity">
    <text evidence="4">Belongs to the peptidase C1 family.</text>
</comment>
<name>TINAL_RAT</name>
<accession>Q9EQT5</accession>
<gene>
    <name type="primary">Tinagl1</name>
    <name type="synonym">Gis5</name>
    <name type="synonym">Lcn7</name>
    <name type="synonym">Tinagl</name>
</gene>
<reference key="1">
    <citation type="submission" date="2000-11" db="EMBL/GenBank/DDBJ databases">
        <title>Identification of a novel glucocorticoid-inducible cDNA partially homologous to tubulointerstitial nephritis antigen.</title>
        <authorList>
            <person name="Yoshida H."/>
            <person name="Takaishi K."/>
            <person name="Harada M."/>
            <person name="Nagasaka T."/>
            <person name="Tsurufuji S."/>
            <person name="Taniguchi M."/>
        </authorList>
    </citation>
    <scope>NUCLEOTIDE SEQUENCE [MRNA]</scope>
</reference>
<organism>
    <name type="scientific">Rattus norvegicus</name>
    <name type="common">Rat</name>
    <dbReference type="NCBI Taxonomy" id="10116"/>
    <lineage>
        <taxon>Eukaryota</taxon>
        <taxon>Metazoa</taxon>
        <taxon>Chordata</taxon>
        <taxon>Craniata</taxon>
        <taxon>Vertebrata</taxon>
        <taxon>Euteleostomi</taxon>
        <taxon>Mammalia</taxon>
        <taxon>Eutheria</taxon>
        <taxon>Euarchontoglires</taxon>
        <taxon>Glires</taxon>
        <taxon>Rodentia</taxon>
        <taxon>Myomorpha</taxon>
        <taxon>Muroidea</taxon>
        <taxon>Muridae</taxon>
        <taxon>Murinae</taxon>
        <taxon>Rattus</taxon>
    </lineage>
</organism>
<dbReference type="EMBL" id="AB050717">
    <property type="protein sequence ID" value="BAB18637.1"/>
    <property type="molecule type" value="mRNA"/>
</dbReference>
<dbReference type="RefSeq" id="NP_446034.1">
    <property type="nucleotide sequence ID" value="NM_053582.2"/>
</dbReference>
<dbReference type="SMR" id="Q9EQT5"/>
<dbReference type="FunCoup" id="Q9EQT5">
    <property type="interactions" value="295"/>
</dbReference>
<dbReference type="STRING" id="10116.ENSRNOP00000071970"/>
<dbReference type="MEROPS" id="C01.975"/>
<dbReference type="GlyCosmos" id="Q9EQT5">
    <property type="glycosylation" value="2 sites, No reported glycans"/>
</dbReference>
<dbReference type="GlyGen" id="Q9EQT5">
    <property type="glycosylation" value="3 sites"/>
</dbReference>
<dbReference type="PhosphoSitePlus" id="Q9EQT5"/>
<dbReference type="SwissPalm" id="Q9EQT5"/>
<dbReference type="PaxDb" id="10116-ENSRNOP00000018464"/>
<dbReference type="GeneID" id="94174"/>
<dbReference type="KEGG" id="rno:94174"/>
<dbReference type="UCSC" id="RGD:70956">
    <property type="organism name" value="rat"/>
</dbReference>
<dbReference type="AGR" id="RGD:70956"/>
<dbReference type="CTD" id="64129"/>
<dbReference type="RGD" id="70956">
    <property type="gene designation" value="Tinagl1"/>
</dbReference>
<dbReference type="eggNOG" id="KOG1544">
    <property type="taxonomic scope" value="Eukaryota"/>
</dbReference>
<dbReference type="InParanoid" id="Q9EQT5"/>
<dbReference type="OrthoDB" id="190265at2759"/>
<dbReference type="PhylomeDB" id="Q9EQT5"/>
<dbReference type="PRO" id="PR:Q9EQT5"/>
<dbReference type="Proteomes" id="UP000002494">
    <property type="component" value="Unplaced"/>
</dbReference>
<dbReference type="GO" id="GO:0005737">
    <property type="term" value="C:cytoplasm"/>
    <property type="evidence" value="ECO:0000266"/>
    <property type="project" value="RGD"/>
</dbReference>
<dbReference type="GO" id="GO:0005615">
    <property type="term" value="C:extracellular space"/>
    <property type="evidence" value="ECO:0000318"/>
    <property type="project" value="GO_Central"/>
</dbReference>
<dbReference type="GO" id="GO:0005764">
    <property type="term" value="C:lysosome"/>
    <property type="evidence" value="ECO:0000318"/>
    <property type="project" value="GO_Central"/>
</dbReference>
<dbReference type="GO" id="GO:0043236">
    <property type="term" value="F:laminin binding"/>
    <property type="evidence" value="ECO:0000266"/>
    <property type="project" value="RGD"/>
</dbReference>
<dbReference type="CDD" id="cd02620">
    <property type="entry name" value="Peptidase_C1A_CathepsinB"/>
    <property type="match status" value="1"/>
</dbReference>
<dbReference type="FunFam" id="3.90.70.10:FF:000037">
    <property type="entry name" value="Tubulointerstitial nephritis antigen-like 1"/>
    <property type="match status" value="1"/>
</dbReference>
<dbReference type="Gene3D" id="3.90.70.10">
    <property type="entry name" value="Cysteine proteinases"/>
    <property type="match status" value="1"/>
</dbReference>
<dbReference type="InterPro" id="IPR038765">
    <property type="entry name" value="Papain-like_cys_pep_sf"/>
</dbReference>
<dbReference type="InterPro" id="IPR025660">
    <property type="entry name" value="Pept_his_AS"/>
</dbReference>
<dbReference type="InterPro" id="IPR013128">
    <property type="entry name" value="Peptidase_C1A"/>
</dbReference>
<dbReference type="InterPro" id="IPR000668">
    <property type="entry name" value="Peptidase_C1A_C"/>
</dbReference>
<dbReference type="InterPro" id="IPR001212">
    <property type="entry name" value="Somatomedin_B_dom"/>
</dbReference>
<dbReference type="PANTHER" id="PTHR12411">
    <property type="entry name" value="CYSTEINE PROTEASE FAMILY C1-RELATED"/>
    <property type="match status" value="1"/>
</dbReference>
<dbReference type="Pfam" id="PF00112">
    <property type="entry name" value="Peptidase_C1"/>
    <property type="match status" value="1"/>
</dbReference>
<dbReference type="SMART" id="SM00645">
    <property type="entry name" value="Pept_C1"/>
    <property type="match status" value="1"/>
</dbReference>
<dbReference type="SUPFAM" id="SSF54001">
    <property type="entry name" value="Cysteine proteinases"/>
    <property type="match status" value="1"/>
</dbReference>
<dbReference type="PROSITE" id="PS00524">
    <property type="entry name" value="SMB_1"/>
    <property type="match status" value="1"/>
</dbReference>
<dbReference type="PROSITE" id="PS50958">
    <property type="entry name" value="SMB_2"/>
    <property type="match status" value="1"/>
</dbReference>
<dbReference type="PROSITE" id="PS00639">
    <property type="entry name" value="THIOL_PROTEASE_HIS"/>
    <property type="match status" value="1"/>
</dbReference>
<sequence length="467" mass="52821">MWGCPLGLLLLLLAGQAALEARRSRWRRELAPGLHLRGIRDAGGRYCQEQDMCCRGRADECALPYLGATCYCDLFCNRTVSDCCPDFWDFCLGIPPPFPPVQGCMHAGRIYPIFGTYWENCNRCTCHEKGQWECDQEPCLVDPAMIKAINRGNYGWQAGNHSAFWGMTLDEGIRYRLGTIRPSSSVMNMNEIYTVLGQGEVLPTAFEASEKWPNLIHEPLDQGNCAGSWAFSTAAVASDRVSIHSLGHMTPILSPQNLLSCDTHHQKGCRGGRLDGAWWFLRRRGVVSDNCYPFSGREQNDEASPTPRCMMHSRAMGRGKRQATSRCPNSQVDSNDIYQVTPVYRLASDEKEIMKELMENGPVQALMEVHEDFFLYQRGIYSHTPVSQGRPEQYRRHGTHSVKITGWGEETLPDGRTIKYWTAANSWGPWWGERGHFRIVRGINECDIETFVLGVWGRVGMEDMGHH</sequence>
<proteinExistence type="evidence at transcript level"/>
<feature type="signal peptide" evidence="2">
    <location>
        <begin position="1"/>
        <end position="21"/>
    </location>
</feature>
<feature type="chain" id="PRO_0000026484" description="Tubulointerstitial nephritis antigen-like">
    <location>
        <begin position="22"/>
        <end position="467"/>
    </location>
</feature>
<feature type="domain" description="SMB" evidence="3">
    <location>
        <begin position="49"/>
        <end position="96"/>
    </location>
</feature>
<feature type="glycosylation site" description="N-linked (GlcNAc...) asparagine" evidence="2">
    <location>
        <position position="77"/>
    </location>
</feature>
<feature type="glycosylation site" description="N-linked (GlcNAc...) asparagine" evidence="2">
    <location>
        <position position="160"/>
    </location>
</feature>
<feature type="disulfide bond" description="Alternate" evidence="3">
    <location>
        <begin position="53"/>
        <end position="72"/>
    </location>
</feature>
<feature type="disulfide bond" description="Alternate" evidence="3">
    <location>
        <begin position="70"/>
        <end position="84"/>
    </location>
</feature>
<feature type="disulfide bond" evidence="3">
    <location>
        <begin position="70"/>
        <end position="72"/>
    </location>
</feature>
<feature type="disulfide bond" evidence="3">
    <location>
        <begin position="76"/>
        <end position="83"/>
    </location>
</feature>
<feature type="disulfide bond" evidence="3">
    <location>
        <begin position="84"/>
        <end position="91"/>
    </location>
</feature>
<evidence type="ECO:0000250" key="1"/>
<evidence type="ECO:0000255" key="2"/>
<evidence type="ECO:0000255" key="3">
    <source>
        <dbReference type="PROSITE-ProRule" id="PRU00350"/>
    </source>
</evidence>
<evidence type="ECO:0000255" key="4">
    <source>
        <dbReference type="PROSITE-ProRule" id="PRU10089"/>
    </source>
</evidence>